<evidence type="ECO:0000255" key="1">
    <source>
        <dbReference type="HAMAP-Rule" id="MF_00079"/>
    </source>
</evidence>
<name>HIS1_BIFLD</name>
<protein>
    <recommendedName>
        <fullName evidence="1">ATP phosphoribosyltransferase</fullName>
        <shortName evidence="1">ATP-PRT</shortName>
        <shortName evidence="1">ATP-PRTase</shortName>
        <ecNumber evidence="1">2.4.2.17</ecNumber>
    </recommendedName>
</protein>
<feature type="chain" id="PRO_1000092727" description="ATP phosphoribosyltransferase">
    <location>
        <begin position="1"/>
        <end position="283"/>
    </location>
</feature>
<keyword id="KW-0028">Amino-acid biosynthesis</keyword>
<keyword id="KW-0067">ATP-binding</keyword>
<keyword id="KW-0963">Cytoplasm</keyword>
<keyword id="KW-0328">Glycosyltransferase</keyword>
<keyword id="KW-0368">Histidine biosynthesis</keyword>
<keyword id="KW-0460">Magnesium</keyword>
<keyword id="KW-0479">Metal-binding</keyword>
<keyword id="KW-0547">Nucleotide-binding</keyword>
<keyword id="KW-0808">Transferase</keyword>
<proteinExistence type="inferred from homology"/>
<dbReference type="EC" id="2.4.2.17" evidence="1"/>
<dbReference type="EMBL" id="CP000605">
    <property type="protein sequence ID" value="ACD97924.1"/>
    <property type="molecule type" value="Genomic_DNA"/>
</dbReference>
<dbReference type="RefSeq" id="WP_012471863.1">
    <property type="nucleotide sequence ID" value="NZ_AABM02000001.1"/>
</dbReference>
<dbReference type="SMR" id="B3DS05"/>
<dbReference type="KEGG" id="blj:BLD_0478"/>
<dbReference type="HOGENOM" id="CLU_038115_1_1_11"/>
<dbReference type="UniPathway" id="UPA00031">
    <property type="reaction ID" value="UER00006"/>
</dbReference>
<dbReference type="Proteomes" id="UP000002419">
    <property type="component" value="Chromosome"/>
</dbReference>
<dbReference type="GO" id="GO:0005737">
    <property type="term" value="C:cytoplasm"/>
    <property type="evidence" value="ECO:0007669"/>
    <property type="project" value="UniProtKB-SubCell"/>
</dbReference>
<dbReference type="GO" id="GO:0005524">
    <property type="term" value="F:ATP binding"/>
    <property type="evidence" value="ECO:0007669"/>
    <property type="project" value="UniProtKB-KW"/>
</dbReference>
<dbReference type="GO" id="GO:0003879">
    <property type="term" value="F:ATP phosphoribosyltransferase activity"/>
    <property type="evidence" value="ECO:0007669"/>
    <property type="project" value="UniProtKB-UniRule"/>
</dbReference>
<dbReference type="GO" id="GO:0000287">
    <property type="term" value="F:magnesium ion binding"/>
    <property type="evidence" value="ECO:0007669"/>
    <property type="project" value="UniProtKB-UniRule"/>
</dbReference>
<dbReference type="GO" id="GO:0000105">
    <property type="term" value="P:L-histidine biosynthetic process"/>
    <property type="evidence" value="ECO:0007669"/>
    <property type="project" value="UniProtKB-UniRule"/>
</dbReference>
<dbReference type="Gene3D" id="3.30.70.120">
    <property type="match status" value="1"/>
</dbReference>
<dbReference type="Gene3D" id="3.40.190.10">
    <property type="entry name" value="Periplasmic binding protein-like II"/>
    <property type="match status" value="2"/>
</dbReference>
<dbReference type="HAMAP" id="MF_00079">
    <property type="entry name" value="HisG_Long"/>
    <property type="match status" value="1"/>
</dbReference>
<dbReference type="InterPro" id="IPR020621">
    <property type="entry name" value="ATP-PRT_HisG_long"/>
</dbReference>
<dbReference type="InterPro" id="IPR013820">
    <property type="entry name" value="ATP_PRibTrfase_cat"/>
</dbReference>
<dbReference type="InterPro" id="IPR018198">
    <property type="entry name" value="ATP_PRibTrfase_CS"/>
</dbReference>
<dbReference type="InterPro" id="IPR001348">
    <property type="entry name" value="ATP_PRibTrfase_HisG"/>
</dbReference>
<dbReference type="InterPro" id="IPR013115">
    <property type="entry name" value="HisG_C"/>
</dbReference>
<dbReference type="InterPro" id="IPR011322">
    <property type="entry name" value="N-reg_PII-like_a/b"/>
</dbReference>
<dbReference type="InterPro" id="IPR015867">
    <property type="entry name" value="N-reg_PII/ATP_PRibTrfase_C"/>
</dbReference>
<dbReference type="NCBIfam" id="TIGR00070">
    <property type="entry name" value="hisG"/>
    <property type="match status" value="1"/>
</dbReference>
<dbReference type="NCBIfam" id="TIGR03455">
    <property type="entry name" value="HisG_C-term"/>
    <property type="match status" value="1"/>
</dbReference>
<dbReference type="PANTHER" id="PTHR21403:SF8">
    <property type="entry name" value="ATP PHOSPHORIBOSYLTRANSFERASE"/>
    <property type="match status" value="1"/>
</dbReference>
<dbReference type="PANTHER" id="PTHR21403">
    <property type="entry name" value="ATP PHOSPHORIBOSYLTRANSFERASE ATP-PRTASE"/>
    <property type="match status" value="1"/>
</dbReference>
<dbReference type="Pfam" id="PF01634">
    <property type="entry name" value="HisG"/>
    <property type="match status" value="1"/>
</dbReference>
<dbReference type="Pfam" id="PF08029">
    <property type="entry name" value="HisG_C"/>
    <property type="match status" value="1"/>
</dbReference>
<dbReference type="SUPFAM" id="SSF54913">
    <property type="entry name" value="GlnB-like"/>
    <property type="match status" value="1"/>
</dbReference>
<dbReference type="SUPFAM" id="SSF53850">
    <property type="entry name" value="Periplasmic binding protein-like II"/>
    <property type="match status" value="1"/>
</dbReference>
<dbReference type="PROSITE" id="PS01316">
    <property type="entry name" value="ATP_P_PHORIBOSYLTR"/>
    <property type="match status" value="1"/>
</dbReference>
<gene>
    <name evidence="1" type="primary">hisG</name>
    <name type="ordered locus">BLD_0478</name>
</gene>
<comment type="function">
    <text evidence="1">Catalyzes the condensation of ATP and 5-phosphoribose 1-diphosphate to form N'-(5'-phosphoribosyl)-ATP (PR-ATP). Has a crucial role in the pathway because the rate of histidine biosynthesis seems to be controlled primarily by regulation of HisG enzymatic activity.</text>
</comment>
<comment type="catalytic activity">
    <reaction evidence="1">
        <text>1-(5-phospho-beta-D-ribosyl)-ATP + diphosphate = 5-phospho-alpha-D-ribose 1-diphosphate + ATP</text>
        <dbReference type="Rhea" id="RHEA:18473"/>
        <dbReference type="ChEBI" id="CHEBI:30616"/>
        <dbReference type="ChEBI" id="CHEBI:33019"/>
        <dbReference type="ChEBI" id="CHEBI:58017"/>
        <dbReference type="ChEBI" id="CHEBI:73183"/>
        <dbReference type="EC" id="2.4.2.17"/>
    </reaction>
</comment>
<comment type="cofactor">
    <cofactor evidence="1">
        <name>Mg(2+)</name>
        <dbReference type="ChEBI" id="CHEBI:18420"/>
    </cofactor>
</comment>
<comment type="activity regulation">
    <text evidence="1">Feedback inhibited by histidine.</text>
</comment>
<comment type="pathway">
    <text evidence="1">Amino-acid biosynthesis; L-histidine biosynthesis; L-histidine from 5-phospho-alpha-D-ribose 1-diphosphate: step 1/9.</text>
</comment>
<comment type="subcellular location">
    <subcellularLocation>
        <location evidence="1">Cytoplasm</location>
    </subcellularLocation>
</comment>
<comment type="similarity">
    <text evidence="1">Belongs to the ATP phosphoribosyltransferase family. Long subfamily.</text>
</comment>
<sequence length="283" mass="30859">MLRIAVPNKGMLSEPAWNMLAEAGYRLRTNPRQLVVQDPDNGIELFYLRPLDIAVYVGRGAIDVGITGQDLLKNSGTAALEHMPLGFGASTFRFAAPNESPITTLEDVQGKRVATTFDKLVHDYLVEHGIQAETIHLDGAVESSVQLGVADLIADVVSTGTTLRNAGLRVFAEPLMHSEACLIRSPRLNEQDPRLAVLTRRLQGVLTAHQYVLMDYDIPISKVAAAVAVTPGFESPTISPLHDKQWNAVRVMVPKAKVNQLMDDLYEVGARGIIVTALQASRM</sequence>
<accession>B3DS05</accession>
<reference key="1">
    <citation type="journal article" date="2008" name="BMC Genomics">
        <title>Comparative genomic analysis of the gut bacterium Bifidobacterium longum reveals loci susceptible to deletion during pure culture growth.</title>
        <authorList>
            <person name="Lee J.H."/>
            <person name="Karamychev V.N."/>
            <person name="Kozyavkin S.A."/>
            <person name="Mills D."/>
            <person name="Pavlov A.R."/>
            <person name="Pavlova N.V."/>
            <person name="Polouchine N.N."/>
            <person name="Richardson P.M."/>
            <person name="Shakhova V.V."/>
            <person name="Slesarev A.I."/>
            <person name="Weimer B."/>
            <person name="O'Sullivan D.J."/>
        </authorList>
    </citation>
    <scope>NUCLEOTIDE SEQUENCE [LARGE SCALE GENOMIC DNA]</scope>
    <source>
        <strain>DJO10A</strain>
    </source>
</reference>
<organism>
    <name type="scientific">Bifidobacterium longum (strain DJO10A)</name>
    <dbReference type="NCBI Taxonomy" id="205913"/>
    <lineage>
        <taxon>Bacteria</taxon>
        <taxon>Bacillati</taxon>
        <taxon>Actinomycetota</taxon>
        <taxon>Actinomycetes</taxon>
        <taxon>Bifidobacteriales</taxon>
        <taxon>Bifidobacteriaceae</taxon>
        <taxon>Bifidobacterium</taxon>
    </lineage>
</organism>